<reference key="1">
    <citation type="journal article" date="2015" name="Genome Announc.">
        <title>Draft genome sequence of the cellulolytic fungus Chaetomium globosum.</title>
        <authorList>
            <person name="Cuomo C.A."/>
            <person name="Untereiner W.A."/>
            <person name="Ma L.-J."/>
            <person name="Grabherr M."/>
            <person name="Birren B.W."/>
        </authorList>
    </citation>
    <scope>NUCLEOTIDE SEQUENCE [LARGE SCALE GENOMIC DNA]</scope>
    <source>
        <strain>ATCC 6205 / CBS 148.51 / DSM 1962 / NBRC 6347 / NRRL 1970</strain>
    </source>
</reference>
<name>SET2_CHAGB</name>
<gene>
    <name type="primary">SET2</name>
    <name type="ORF">CHGG_03216</name>
</gene>
<protein>
    <recommendedName>
        <fullName>Histone-lysine N-methyltransferase, H3 lysine-36 specific</fullName>
        <ecNumber evidence="2">2.1.1.359</ecNumber>
    </recommendedName>
    <alternativeName>
        <fullName>SET domain-containing protein 2</fullName>
    </alternativeName>
</protein>
<evidence type="ECO:0000250" key="1"/>
<evidence type="ECO:0000250" key="2">
    <source>
        <dbReference type="UniProtKB" id="P46995"/>
    </source>
</evidence>
<evidence type="ECO:0000255" key="3">
    <source>
        <dbReference type="PROSITE-ProRule" id="PRU00155"/>
    </source>
</evidence>
<evidence type="ECO:0000255" key="4">
    <source>
        <dbReference type="PROSITE-ProRule" id="PRU00190"/>
    </source>
</evidence>
<evidence type="ECO:0000255" key="5">
    <source>
        <dbReference type="PROSITE-ProRule" id="PRU00224"/>
    </source>
</evidence>
<evidence type="ECO:0000255" key="6">
    <source>
        <dbReference type="PROSITE-ProRule" id="PRU00562"/>
    </source>
</evidence>
<evidence type="ECO:0000255" key="7">
    <source>
        <dbReference type="PROSITE-ProRule" id="PRU00901"/>
    </source>
</evidence>
<evidence type="ECO:0000256" key="8">
    <source>
        <dbReference type="SAM" id="MobiDB-lite"/>
    </source>
</evidence>
<comment type="function">
    <text evidence="2">Histone methyltransferase that trimethylates histone H3 'Lys-36' forming H3K36me3. Involved in transcription elongation as well as in transcription repression.</text>
</comment>
<comment type="catalytic activity">
    <reaction evidence="2 7">
        <text>L-lysyl(36)-[histone H3] + 3 S-adenosyl-L-methionine = N(6),N(6),N(6)-trimethyl-L-lysyl(36)-[histone H3] + 3 S-adenosyl-L-homocysteine + 3 H(+)</text>
        <dbReference type="Rhea" id="RHEA:60324"/>
        <dbReference type="Rhea" id="RHEA-COMP:9785"/>
        <dbReference type="Rhea" id="RHEA-COMP:15536"/>
        <dbReference type="ChEBI" id="CHEBI:15378"/>
        <dbReference type="ChEBI" id="CHEBI:29969"/>
        <dbReference type="ChEBI" id="CHEBI:57856"/>
        <dbReference type="ChEBI" id="CHEBI:59789"/>
        <dbReference type="ChEBI" id="CHEBI:61961"/>
        <dbReference type="EC" id="2.1.1.359"/>
    </reaction>
</comment>
<comment type="subcellular location">
    <subcellularLocation>
        <location evidence="1">Nucleus</location>
    </subcellularLocation>
    <subcellularLocation>
        <location evidence="1">Chromosome</location>
    </subcellularLocation>
</comment>
<comment type="domain">
    <text evidence="1">The AWS and SET domains are necessary for transcription repression.</text>
</comment>
<comment type="similarity">
    <text evidence="7">Belongs to the class V-like SAM-binding methyltransferase superfamily. Histone-lysine methyltransferase family. SET2 subfamily.</text>
</comment>
<accession>Q2H988</accession>
<feature type="chain" id="PRO_0000269784" description="Histone-lysine N-methyltransferase, H3 lysine-36 specific">
    <location>
        <begin position="1"/>
        <end position="894"/>
    </location>
</feature>
<feature type="domain" description="AWS" evidence="6">
    <location>
        <begin position="72"/>
        <end position="126"/>
    </location>
</feature>
<feature type="domain" description="SET" evidence="4">
    <location>
        <begin position="128"/>
        <end position="245"/>
    </location>
</feature>
<feature type="domain" description="Post-SET" evidence="3">
    <location>
        <begin position="252"/>
        <end position="268"/>
    </location>
</feature>
<feature type="domain" description="WW" evidence="5">
    <location>
        <begin position="512"/>
        <end position="544"/>
    </location>
</feature>
<feature type="region of interest" description="Disordered" evidence="8">
    <location>
        <begin position="1"/>
        <end position="44"/>
    </location>
</feature>
<feature type="region of interest" description="Disordered" evidence="8">
    <location>
        <begin position="447"/>
        <end position="494"/>
    </location>
</feature>
<feature type="region of interest" description="Disordered" evidence="8">
    <location>
        <begin position="572"/>
        <end position="604"/>
    </location>
</feature>
<feature type="region of interest" description="Disordered" evidence="8">
    <location>
        <begin position="678"/>
        <end position="830"/>
    </location>
</feature>
<feature type="compositionally biased region" description="Basic and acidic residues" evidence="8">
    <location>
        <begin position="462"/>
        <end position="475"/>
    </location>
</feature>
<feature type="compositionally biased region" description="Polar residues" evidence="8">
    <location>
        <begin position="582"/>
        <end position="591"/>
    </location>
</feature>
<feature type="compositionally biased region" description="Pro residues" evidence="8">
    <location>
        <begin position="774"/>
        <end position="788"/>
    </location>
</feature>
<feature type="compositionally biased region" description="Basic and acidic residues" evidence="8">
    <location>
        <begin position="792"/>
        <end position="830"/>
    </location>
</feature>
<sequence>MSPDDAKSAADGTSVPENGTAPKLSRKPSQKLPRGPPPLFDHLPDATADACDTFQVINDCLYGSKNMGSSDHDALDCDCAEEWHDGQNHACGEDSDCINRATKIECVSGDCNCGEGCENQRFQRKQYANVSVIKTEKKGFGLRTDADLQANDFVFEYVGEVINEPTFRNRTVKYDKEGIKHFYFMSLTKSEFVDATKKGNLGRFCNHSCNPNCYVDKWVVGDKLRMGIFATRAIRAGEELVFNYNVDRYGADPQPCYCGESNCVGFIGGKTQTERATKLPLATIEALGIDDGDSWDTAVAKKPRKKKAHEDDEDYVNSVQPRALDEDGVNKVMATLMQCKEKWIAVKLLSRLQATEDEHLRHRVVRMHGYQILKTTLNTFKDDTNVVLQILDILYQLPRITKNKISDSKVEGAVEPLASAAHEEVALAAKRLLDEWSKLETAYRIPRKKHDHAGPIPGNSFEEERRNKDREEPAKPTDPFANIVIPTGPRSTIPQRNANFFAGQQRPRKPPTNLPAGWFVNTDKTGRYYFYDATGRTQWQRPLTPAIETPKVSAKAQQDQKALQSIIDSLTKEPTPRHSAGHTPQRSTTPATEPKKDKWRSLPLEKQMKIYENTHVVDRFHGKLPKEELKKFAREVNKKLVSSDYKNNRVEDPTSIPPKQAKKVRKYAHDFFDRAVAKYTEHEKKKAHNPSKPTSGVPPGDVASSAATPAKDDVTMSDVEADTSPGSSAGRKRKRDGDDEHDDPAESPGAPPSETPSVKRIKEDDAEGEGEPTTIPPPPTPPPPPADTPPTEEDRSMREQEEALMRENEEAQRLEDEAQAEEGGKGSHEWNGRYHRTCAAGERAVEWRVGNGWCYGDDGHGRAAATTAAAAATAAAGSAGSLKTTLACFAFAPC</sequence>
<organism>
    <name type="scientific">Chaetomium globosum (strain ATCC 6205 / CBS 148.51 / DSM 1962 / NBRC 6347 / NRRL 1970)</name>
    <name type="common">Soil fungus</name>
    <dbReference type="NCBI Taxonomy" id="306901"/>
    <lineage>
        <taxon>Eukaryota</taxon>
        <taxon>Fungi</taxon>
        <taxon>Dikarya</taxon>
        <taxon>Ascomycota</taxon>
        <taxon>Pezizomycotina</taxon>
        <taxon>Sordariomycetes</taxon>
        <taxon>Sordariomycetidae</taxon>
        <taxon>Sordariales</taxon>
        <taxon>Chaetomiaceae</taxon>
        <taxon>Chaetomium</taxon>
    </lineage>
</organism>
<keyword id="KW-0158">Chromosome</keyword>
<keyword id="KW-0489">Methyltransferase</keyword>
<keyword id="KW-0539">Nucleus</keyword>
<keyword id="KW-1185">Reference proteome</keyword>
<keyword id="KW-0678">Repressor</keyword>
<keyword id="KW-0949">S-adenosyl-L-methionine</keyword>
<keyword id="KW-0804">Transcription</keyword>
<keyword id="KW-0805">Transcription regulation</keyword>
<keyword id="KW-0808">Transferase</keyword>
<dbReference type="EC" id="2.1.1.359" evidence="2"/>
<dbReference type="EMBL" id="CH408030">
    <property type="protein sequence ID" value="EAQ91281.1"/>
    <property type="molecule type" value="Genomic_DNA"/>
</dbReference>
<dbReference type="RefSeq" id="XP_001229732.1">
    <property type="nucleotide sequence ID" value="XM_001229731.1"/>
</dbReference>
<dbReference type="SMR" id="Q2H988"/>
<dbReference type="FunCoup" id="Q2H988">
    <property type="interactions" value="90"/>
</dbReference>
<dbReference type="STRING" id="306901.Q2H988"/>
<dbReference type="GeneID" id="4389690"/>
<dbReference type="VEuPathDB" id="FungiDB:CHGG_03216"/>
<dbReference type="eggNOG" id="KOG4442">
    <property type="taxonomic scope" value="Eukaryota"/>
</dbReference>
<dbReference type="HOGENOM" id="CLU_008492_0_0_1"/>
<dbReference type="InParanoid" id="Q2H988"/>
<dbReference type="OMA" id="AQSQPCY"/>
<dbReference type="OrthoDB" id="422362at2759"/>
<dbReference type="Proteomes" id="UP000001056">
    <property type="component" value="Unassembled WGS sequence"/>
</dbReference>
<dbReference type="GO" id="GO:0005694">
    <property type="term" value="C:chromosome"/>
    <property type="evidence" value="ECO:0007669"/>
    <property type="project" value="UniProtKB-SubCell"/>
</dbReference>
<dbReference type="GO" id="GO:0005634">
    <property type="term" value="C:nucleus"/>
    <property type="evidence" value="ECO:0007669"/>
    <property type="project" value="UniProtKB-SubCell"/>
</dbReference>
<dbReference type="GO" id="GO:0140955">
    <property type="term" value="F:histone H3K36 trimethyltransferase activity"/>
    <property type="evidence" value="ECO:0007669"/>
    <property type="project" value="UniProtKB-EC"/>
</dbReference>
<dbReference type="GO" id="GO:0032259">
    <property type="term" value="P:methylation"/>
    <property type="evidence" value="ECO:0007669"/>
    <property type="project" value="UniProtKB-KW"/>
</dbReference>
<dbReference type="GO" id="GO:0006355">
    <property type="term" value="P:regulation of DNA-templated transcription"/>
    <property type="evidence" value="ECO:0007669"/>
    <property type="project" value="InterPro"/>
</dbReference>
<dbReference type="CDD" id="cd19172">
    <property type="entry name" value="SET_SETD2"/>
    <property type="match status" value="1"/>
</dbReference>
<dbReference type="CDD" id="cd00201">
    <property type="entry name" value="WW"/>
    <property type="match status" value="1"/>
</dbReference>
<dbReference type="FunFam" id="2.170.270.10:FF:000033">
    <property type="entry name" value="Histone-lysine N-methyltransferase"/>
    <property type="match status" value="1"/>
</dbReference>
<dbReference type="FunFam" id="2.20.70.10:FF:000143">
    <property type="entry name" value="Histone-lysine N-methyltransferase, H3 lysine-36 specific"/>
    <property type="match status" value="1"/>
</dbReference>
<dbReference type="Gene3D" id="2.20.70.10">
    <property type="match status" value="1"/>
</dbReference>
<dbReference type="Gene3D" id="2.170.270.10">
    <property type="entry name" value="SET domain"/>
    <property type="match status" value="1"/>
</dbReference>
<dbReference type="Gene3D" id="1.10.1740.100">
    <property type="entry name" value="Set2, Rpb1 interacting domain"/>
    <property type="match status" value="1"/>
</dbReference>
<dbReference type="InterPro" id="IPR006560">
    <property type="entry name" value="AWS_dom"/>
</dbReference>
<dbReference type="InterPro" id="IPR003616">
    <property type="entry name" value="Post-SET_dom"/>
</dbReference>
<dbReference type="InterPro" id="IPR025788">
    <property type="entry name" value="Set2_fungi"/>
</dbReference>
<dbReference type="InterPro" id="IPR050777">
    <property type="entry name" value="SET2_Histone-Lys_MeTrsfase"/>
</dbReference>
<dbReference type="InterPro" id="IPR001214">
    <property type="entry name" value="SET_dom"/>
</dbReference>
<dbReference type="InterPro" id="IPR046341">
    <property type="entry name" value="SET_dom_sf"/>
</dbReference>
<dbReference type="InterPro" id="IPR044437">
    <property type="entry name" value="SETD2/Set2_SET"/>
</dbReference>
<dbReference type="InterPro" id="IPR013257">
    <property type="entry name" value="SRI"/>
</dbReference>
<dbReference type="InterPro" id="IPR038190">
    <property type="entry name" value="SRI_sf"/>
</dbReference>
<dbReference type="InterPro" id="IPR035441">
    <property type="entry name" value="TFIIS/LEDGF_dom_sf"/>
</dbReference>
<dbReference type="InterPro" id="IPR017923">
    <property type="entry name" value="TFIIS_N"/>
</dbReference>
<dbReference type="InterPro" id="IPR001202">
    <property type="entry name" value="WW_dom"/>
</dbReference>
<dbReference type="InterPro" id="IPR036020">
    <property type="entry name" value="WW_dom_sf"/>
</dbReference>
<dbReference type="PANTHER" id="PTHR22884">
    <property type="entry name" value="SET DOMAIN PROTEINS"/>
    <property type="match status" value="1"/>
</dbReference>
<dbReference type="Pfam" id="PF17907">
    <property type="entry name" value="AWS"/>
    <property type="match status" value="1"/>
</dbReference>
<dbReference type="Pfam" id="PF08711">
    <property type="entry name" value="Med26"/>
    <property type="match status" value="1"/>
</dbReference>
<dbReference type="Pfam" id="PF00856">
    <property type="entry name" value="SET"/>
    <property type="match status" value="1"/>
</dbReference>
<dbReference type="Pfam" id="PF08236">
    <property type="entry name" value="SRI"/>
    <property type="match status" value="1"/>
</dbReference>
<dbReference type="Pfam" id="PF00397">
    <property type="entry name" value="WW"/>
    <property type="match status" value="1"/>
</dbReference>
<dbReference type="SMART" id="SM00570">
    <property type="entry name" value="AWS"/>
    <property type="match status" value="1"/>
</dbReference>
<dbReference type="SMART" id="SM00508">
    <property type="entry name" value="PostSET"/>
    <property type="match status" value="1"/>
</dbReference>
<dbReference type="SMART" id="SM00317">
    <property type="entry name" value="SET"/>
    <property type="match status" value="1"/>
</dbReference>
<dbReference type="SMART" id="SM00456">
    <property type="entry name" value="WW"/>
    <property type="match status" value="1"/>
</dbReference>
<dbReference type="SUPFAM" id="SSF47676">
    <property type="entry name" value="Conserved domain common to transcription factors TFIIS, elongin A, CRSP70"/>
    <property type="match status" value="1"/>
</dbReference>
<dbReference type="SUPFAM" id="SSF82199">
    <property type="entry name" value="SET domain"/>
    <property type="match status" value="1"/>
</dbReference>
<dbReference type="SUPFAM" id="SSF51045">
    <property type="entry name" value="WW domain"/>
    <property type="match status" value="1"/>
</dbReference>
<dbReference type="PROSITE" id="PS51215">
    <property type="entry name" value="AWS"/>
    <property type="match status" value="1"/>
</dbReference>
<dbReference type="PROSITE" id="PS50868">
    <property type="entry name" value="POST_SET"/>
    <property type="match status" value="1"/>
</dbReference>
<dbReference type="PROSITE" id="PS51568">
    <property type="entry name" value="SAM_MT43_SET2_1"/>
    <property type="match status" value="1"/>
</dbReference>
<dbReference type="PROSITE" id="PS50280">
    <property type="entry name" value="SET"/>
    <property type="match status" value="1"/>
</dbReference>
<dbReference type="PROSITE" id="PS01159">
    <property type="entry name" value="WW_DOMAIN_1"/>
    <property type="match status" value="1"/>
</dbReference>
<dbReference type="PROSITE" id="PS50020">
    <property type="entry name" value="WW_DOMAIN_2"/>
    <property type="match status" value="1"/>
</dbReference>
<proteinExistence type="inferred from homology"/>